<keyword id="KW-0276">Fatty acid metabolism</keyword>
<keyword id="KW-0413">Isomerase</keyword>
<keyword id="KW-0442">Lipid degradation</keyword>
<keyword id="KW-0443">Lipid metabolism</keyword>
<keyword id="KW-0456">Lyase</keyword>
<keyword id="KW-0511">Multifunctional enzyme</keyword>
<keyword id="KW-0520">NAD</keyword>
<keyword id="KW-0560">Oxidoreductase</keyword>
<dbReference type="EC" id="4.2.1.17" evidence="1"/>
<dbReference type="EC" id="5.1.2.3" evidence="1"/>
<dbReference type="EC" id="5.3.3.8" evidence="1"/>
<dbReference type="EC" id="1.1.1.35" evidence="1"/>
<dbReference type="EMBL" id="CU928164">
    <property type="protein sequence ID" value="CAR19268.1"/>
    <property type="molecule type" value="Genomic_DNA"/>
</dbReference>
<dbReference type="RefSeq" id="WP_000965965.1">
    <property type="nucleotide sequence ID" value="NC_011750.1"/>
</dbReference>
<dbReference type="RefSeq" id="YP_002409078.1">
    <property type="nucleotide sequence ID" value="NC_011750.1"/>
</dbReference>
<dbReference type="SMR" id="B7NV20"/>
<dbReference type="STRING" id="585057.ECIAI39_3149"/>
<dbReference type="KEGG" id="ect:ECIAI39_3149"/>
<dbReference type="PATRIC" id="fig|585057.6.peg.3270"/>
<dbReference type="HOGENOM" id="CLU_009834_16_3_6"/>
<dbReference type="UniPathway" id="UPA00659"/>
<dbReference type="Proteomes" id="UP000000749">
    <property type="component" value="Chromosome"/>
</dbReference>
<dbReference type="GO" id="GO:0036125">
    <property type="term" value="C:fatty acid beta-oxidation multienzyme complex"/>
    <property type="evidence" value="ECO:0007669"/>
    <property type="project" value="InterPro"/>
</dbReference>
<dbReference type="GO" id="GO:0008692">
    <property type="term" value="F:3-hydroxybutyryl-CoA epimerase activity"/>
    <property type="evidence" value="ECO:0007669"/>
    <property type="project" value="UniProtKB-UniRule"/>
</dbReference>
<dbReference type="GO" id="GO:0004165">
    <property type="term" value="F:delta(3)-delta(2)-enoyl-CoA isomerase activity"/>
    <property type="evidence" value="ECO:0007669"/>
    <property type="project" value="UniProtKB-UniRule"/>
</dbReference>
<dbReference type="GO" id="GO:0004300">
    <property type="term" value="F:enoyl-CoA hydratase activity"/>
    <property type="evidence" value="ECO:0007669"/>
    <property type="project" value="UniProtKB-UniRule"/>
</dbReference>
<dbReference type="GO" id="GO:0016509">
    <property type="term" value="F:long-chain-3-hydroxyacyl-CoA dehydrogenase activity"/>
    <property type="evidence" value="ECO:0007669"/>
    <property type="project" value="TreeGrafter"/>
</dbReference>
<dbReference type="GO" id="GO:0070403">
    <property type="term" value="F:NAD+ binding"/>
    <property type="evidence" value="ECO:0007669"/>
    <property type="project" value="InterPro"/>
</dbReference>
<dbReference type="GO" id="GO:0006635">
    <property type="term" value="P:fatty acid beta-oxidation"/>
    <property type="evidence" value="ECO:0007669"/>
    <property type="project" value="UniProtKB-UniRule"/>
</dbReference>
<dbReference type="CDD" id="cd06558">
    <property type="entry name" value="crotonase-like"/>
    <property type="match status" value="1"/>
</dbReference>
<dbReference type="FunFam" id="1.10.1040.50:FF:000001">
    <property type="entry name" value="Fatty acid oxidation complex subunit alpha"/>
    <property type="match status" value="1"/>
</dbReference>
<dbReference type="FunFam" id="3.90.226.10:FF:000018">
    <property type="entry name" value="Fatty acid oxidation complex subunit alpha"/>
    <property type="match status" value="1"/>
</dbReference>
<dbReference type="FunFam" id="3.40.50.720:FF:000009">
    <property type="entry name" value="Fatty oxidation complex, alpha subunit"/>
    <property type="match status" value="1"/>
</dbReference>
<dbReference type="Gene3D" id="1.10.1040.50">
    <property type="match status" value="1"/>
</dbReference>
<dbReference type="Gene3D" id="3.90.226.10">
    <property type="entry name" value="2-enoyl-CoA Hydratase, Chain A, domain 1"/>
    <property type="match status" value="1"/>
</dbReference>
<dbReference type="Gene3D" id="3.40.50.720">
    <property type="entry name" value="NAD(P)-binding Rossmann-like Domain"/>
    <property type="match status" value="1"/>
</dbReference>
<dbReference type="HAMAP" id="MF_01621">
    <property type="entry name" value="FadB"/>
    <property type="match status" value="1"/>
</dbReference>
<dbReference type="InterPro" id="IPR006180">
    <property type="entry name" value="3-OHacyl-CoA_DH_CS"/>
</dbReference>
<dbReference type="InterPro" id="IPR006176">
    <property type="entry name" value="3-OHacyl-CoA_DH_NAD-bd"/>
</dbReference>
<dbReference type="InterPro" id="IPR006108">
    <property type="entry name" value="3HC_DH_C"/>
</dbReference>
<dbReference type="InterPro" id="IPR008927">
    <property type="entry name" value="6-PGluconate_DH-like_C_sf"/>
</dbReference>
<dbReference type="InterPro" id="IPR029045">
    <property type="entry name" value="ClpP/crotonase-like_dom_sf"/>
</dbReference>
<dbReference type="InterPro" id="IPR018376">
    <property type="entry name" value="Enoyl-CoA_hyd/isom_CS"/>
</dbReference>
<dbReference type="InterPro" id="IPR001753">
    <property type="entry name" value="Enoyl-CoA_hydra/iso"/>
</dbReference>
<dbReference type="InterPro" id="IPR050136">
    <property type="entry name" value="FA_oxidation_alpha_subunit"/>
</dbReference>
<dbReference type="InterPro" id="IPR012799">
    <property type="entry name" value="FadB"/>
</dbReference>
<dbReference type="InterPro" id="IPR036291">
    <property type="entry name" value="NAD(P)-bd_dom_sf"/>
</dbReference>
<dbReference type="NCBIfam" id="TIGR02437">
    <property type="entry name" value="FadB"/>
    <property type="match status" value="1"/>
</dbReference>
<dbReference type="NCBIfam" id="NF008727">
    <property type="entry name" value="PRK11730.1"/>
    <property type="match status" value="1"/>
</dbReference>
<dbReference type="PANTHER" id="PTHR43612">
    <property type="entry name" value="TRIFUNCTIONAL ENZYME SUBUNIT ALPHA"/>
    <property type="match status" value="1"/>
</dbReference>
<dbReference type="PANTHER" id="PTHR43612:SF3">
    <property type="entry name" value="TRIFUNCTIONAL ENZYME SUBUNIT ALPHA, MITOCHONDRIAL"/>
    <property type="match status" value="1"/>
</dbReference>
<dbReference type="Pfam" id="PF00725">
    <property type="entry name" value="3HCDH"/>
    <property type="match status" value="2"/>
</dbReference>
<dbReference type="Pfam" id="PF02737">
    <property type="entry name" value="3HCDH_N"/>
    <property type="match status" value="1"/>
</dbReference>
<dbReference type="Pfam" id="PF00378">
    <property type="entry name" value="ECH_1"/>
    <property type="match status" value="1"/>
</dbReference>
<dbReference type="SUPFAM" id="SSF48179">
    <property type="entry name" value="6-phosphogluconate dehydrogenase C-terminal domain-like"/>
    <property type="match status" value="2"/>
</dbReference>
<dbReference type="SUPFAM" id="SSF52096">
    <property type="entry name" value="ClpP/crotonase"/>
    <property type="match status" value="1"/>
</dbReference>
<dbReference type="SUPFAM" id="SSF51735">
    <property type="entry name" value="NAD(P)-binding Rossmann-fold domains"/>
    <property type="match status" value="1"/>
</dbReference>
<dbReference type="PROSITE" id="PS00067">
    <property type="entry name" value="3HCDH"/>
    <property type="match status" value="1"/>
</dbReference>
<dbReference type="PROSITE" id="PS00166">
    <property type="entry name" value="ENOYL_COA_HYDRATASE"/>
    <property type="match status" value="1"/>
</dbReference>
<comment type="function">
    <text evidence="1">Involved in the aerobic and anaerobic degradation of long-chain fatty acids via beta-oxidation cycle. Catalyzes the formation of 3-oxoacyl-CoA from enoyl-CoA via L-3-hydroxyacyl-CoA. It can also use D-3-hydroxyacyl-CoA and cis-3-enoyl-CoA as substrate.</text>
</comment>
<comment type="catalytic activity">
    <reaction evidence="1">
        <text>a (3S)-3-hydroxyacyl-CoA + NAD(+) = a 3-oxoacyl-CoA + NADH + H(+)</text>
        <dbReference type="Rhea" id="RHEA:22432"/>
        <dbReference type="ChEBI" id="CHEBI:15378"/>
        <dbReference type="ChEBI" id="CHEBI:57318"/>
        <dbReference type="ChEBI" id="CHEBI:57540"/>
        <dbReference type="ChEBI" id="CHEBI:57945"/>
        <dbReference type="ChEBI" id="CHEBI:90726"/>
        <dbReference type="EC" id="1.1.1.35"/>
    </reaction>
</comment>
<comment type="catalytic activity">
    <reaction evidence="1">
        <text>a (3S)-3-hydroxyacyl-CoA = a (2E)-enoyl-CoA + H2O</text>
        <dbReference type="Rhea" id="RHEA:16105"/>
        <dbReference type="ChEBI" id="CHEBI:15377"/>
        <dbReference type="ChEBI" id="CHEBI:57318"/>
        <dbReference type="ChEBI" id="CHEBI:58856"/>
        <dbReference type="EC" id="4.2.1.17"/>
    </reaction>
</comment>
<comment type="catalytic activity">
    <reaction evidence="1">
        <text>a 4-saturated-(3S)-3-hydroxyacyl-CoA = a (3E)-enoyl-CoA + H2O</text>
        <dbReference type="Rhea" id="RHEA:20724"/>
        <dbReference type="ChEBI" id="CHEBI:15377"/>
        <dbReference type="ChEBI" id="CHEBI:58521"/>
        <dbReference type="ChEBI" id="CHEBI:137480"/>
        <dbReference type="EC" id="4.2.1.17"/>
    </reaction>
</comment>
<comment type="catalytic activity">
    <reaction evidence="1">
        <text>(3S)-3-hydroxybutanoyl-CoA = (3R)-3-hydroxybutanoyl-CoA</text>
        <dbReference type="Rhea" id="RHEA:21760"/>
        <dbReference type="ChEBI" id="CHEBI:57315"/>
        <dbReference type="ChEBI" id="CHEBI:57316"/>
        <dbReference type="EC" id="5.1.2.3"/>
    </reaction>
</comment>
<comment type="catalytic activity">
    <reaction evidence="1">
        <text>a (3Z)-enoyl-CoA = a 4-saturated (2E)-enoyl-CoA</text>
        <dbReference type="Rhea" id="RHEA:45900"/>
        <dbReference type="ChEBI" id="CHEBI:85097"/>
        <dbReference type="ChEBI" id="CHEBI:85489"/>
        <dbReference type="EC" id="5.3.3.8"/>
    </reaction>
</comment>
<comment type="catalytic activity">
    <reaction evidence="1">
        <text>a (3E)-enoyl-CoA = a 4-saturated (2E)-enoyl-CoA</text>
        <dbReference type="Rhea" id="RHEA:45228"/>
        <dbReference type="ChEBI" id="CHEBI:58521"/>
        <dbReference type="ChEBI" id="CHEBI:85097"/>
        <dbReference type="EC" id="5.3.3.8"/>
    </reaction>
</comment>
<comment type="pathway">
    <text evidence="1">Lipid metabolism; fatty acid beta-oxidation.</text>
</comment>
<comment type="subunit">
    <text evidence="1">Heterotetramer of two alpha chains (FadB) and two beta chains (FadA).</text>
</comment>
<comment type="similarity">
    <text evidence="1">In the N-terminal section; belongs to the enoyl-CoA hydratase/isomerase family.</text>
</comment>
<comment type="similarity">
    <text evidence="1">In the C-terminal section; belongs to the 3-hydroxyacyl-CoA dehydrogenase family.</text>
</comment>
<name>FADB_ECO7I</name>
<feature type="chain" id="PRO_1000186036" description="Fatty acid oxidation complex subunit alpha">
    <location>
        <begin position="1"/>
        <end position="729"/>
    </location>
</feature>
<feature type="region of interest" description="Enoyl-CoA hydratase/isomerase" evidence="1">
    <location>
        <begin position="1"/>
        <end position="189"/>
    </location>
</feature>
<feature type="region of interest" description="3-hydroxyacyl-CoA dehydrogenase" evidence="1">
    <location>
        <begin position="311"/>
        <end position="729"/>
    </location>
</feature>
<feature type="region of interest" description="Disordered" evidence="2">
    <location>
        <begin position="708"/>
        <end position="729"/>
    </location>
</feature>
<feature type="active site" description="For 3-hydroxyacyl-CoA dehydrogenase activity" evidence="1">
    <location>
        <position position="450"/>
    </location>
</feature>
<feature type="binding site" evidence="1">
    <location>
        <position position="296"/>
    </location>
    <ligand>
        <name>substrate</name>
    </ligand>
</feature>
<feature type="binding site" evidence="1">
    <location>
        <position position="324"/>
    </location>
    <ligand>
        <name>NAD(+)</name>
        <dbReference type="ChEBI" id="CHEBI:57540"/>
    </ligand>
</feature>
<feature type="binding site" evidence="1">
    <location>
        <position position="343"/>
    </location>
    <ligand>
        <name>NAD(+)</name>
        <dbReference type="ChEBI" id="CHEBI:57540"/>
    </ligand>
</feature>
<feature type="binding site" evidence="1">
    <location>
        <begin position="400"/>
        <end position="402"/>
    </location>
    <ligand>
        <name>NAD(+)</name>
        <dbReference type="ChEBI" id="CHEBI:57540"/>
    </ligand>
</feature>
<feature type="binding site" evidence="1">
    <location>
        <position position="407"/>
    </location>
    <ligand>
        <name>NAD(+)</name>
        <dbReference type="ChEBI" id="CHEBI:57540"/>
    </ligand>
</feature>
<feature type="binding site" evidence="1">
    <location>
        <position position="429"/>
    </location>
    <ligand>
        <name>NAD(+)</name>
        <dbReference type="ChEBI" id="CHEBI:57540"/>
    </ligand>
</feature>
<feature type="binding site" evidence="1">
    <location>
        <position position="453"/>
    </location>
    <ligand>
        <name>NAD(+)</name>
        <dbReference type="ChEBI" id="CHEBI:57540"/>
    </ligand>
</feature>
<feature type="binding site" evidence="1">
    <location>
        <position position="500"/>
    </location>
    <ligand>
        <name>substrate</name>
    </ligand>
</feature>
<feature type="binding site" evidence="1">
    <location>
        <position position="660"/>
    </location>
    <ligand>
        <name>substrate</name>
    </ligand>
</feature>
<feature type="site" description="Important for catalytic activity" evidence="1">
    <location>
        <position position="119"/>
    </location>
</feature>
<feature type="site" description="Important for catalytic activity" evidence="1">
    <location>
        <position position="139"/>
    </location>
</feature>
<accession>B7NV20</accession>
<organism>
    <name type="scientific">Escherichia coli O7:K1 (strain IAI39 / ExPEC)</name>
    <dbReference type="NCBI Taxonomy" id="585057"/>
    <lineage>
        <taxon>Bacteria</taxon>
        <taxon>Pseudomonadati</taxon>
        <taxon>Pseudomonadota</taxon>
        <taxon>Gammaproteobacteria</taxon>
        <taxon>Enterobacterales</taxon>
        <taxon>Enterobacteriaceae</taxon>
        <taxon>Escherichia</taxon>
    </lineage>
</organism>
<reference key="1">
    <citation type="journal article" date="2009" name="PLoS Genet.">
        <title>Organised genome dynamics in the Escherichia coli species results in highly diverse adaptive paths.</title>
        <authorList>
            <person name="Touchon M."/>
            <person name="Hoede C."/>
            <person name="Tenaillon O."/>
            <person name="Barbe V."/>
            <person name="Baeriswyl S."/>
            <person name="Bidet P."/>
            <person name="Bingen E."/>
            <person name="Bonacorsi S."/>
            <person name="Bouchier C."/>
            <person name="Bouvet O."/>
            <person name="Calteau A."/>
            <person name="Chiapello H."/>
            <person name="Clermont O."/>
            <person name="Cruveiller S."/>
            <person name="Danchin A."/>
            <person name="Diard M."/>
            <person name="Dossat C."/>
            <person name="Karoui M.E."/>
            <person name="Frapy E."/>
            <person name="Garry L."/>
            <person name="Ghigo J.M."/>
            <person name="Gilles A.M."/>
            <person name="Johnson J."/>
            <person name="Le Bouguenec C."/>
            <person name="Lescat M."/>
            <person name="Mangenot S."/>
            <person name="Martinez-Jehanne V."/>
            <person name="Matic I."/>
            <person name="Nassif X."/>
            <person name="Oztas S."/>
            <person name="Petit M.A."/>
            <person name="Pichon C."/>
            <person name="Rouy Z."/>
            <person name="Ruf C.S."/>
            <person name="Schneider D."/>
            <person name="Tourret J."/>
            <person name="Vacherie B."/>
            <person name="Vallenet D."/>
            <person name="Medigue C."/>
            <person name="Rocha E.P.C."/>
            <person name="Denamur E."/>
        </authorList>
    </citation>
    <scope>NUCLEOTIDE SEQUENCE [LARGE SCALE GENOMIC DNA]</scope>
    <source>
        <strain>IAI39 / ExPEC</strain>
    </source>
</reference>
<gene>
    <name evidence="1" type="primary">fadB</name>
    <name type="ordered locus">ECIAI39_3149</name>
</gene>
<proteinExistence type="inferred from homology"/>
<evidence type="ECO:0000255" key="1">
    <source>
        <dbReference type="HAMAP-Rule" id="MF_01621"/>
    </source>
</evidence>
<evidence type="ECO:0000256" key="2">
    <source>
        <dbReference type="SAM" id="MobiDB-lite"/>
    </source>
</evidence>
<sequence>MLYKGDTLYLDWLEDGIAELVFDAPGSVNKLDTATVASLGEAIGVLEQQSDLKGLLLRSNKAAFIVGADITEFLSLFLVPEEQLSQWLHFANSVFNRLEDLPVPTIAAVNGYALGGGCECVLATDYRLATPDLRIGLPETKLGIMPGFGGSVRMPRMLGADSALEIIAAGKDVGADQALKIGLVDGVVKAEKLVEGAMAILRQAINGDLDWKAKRQPKLEPLKLSKIEATMSFTIAKGMVAQTAGKHYPAPITAVKTIEAAARFGREEALNLENKSFVPLAHTNEARALVGIFLNDQYVKGKAKKLTKDVETPKQAAVLGAGIMGGGIAYQSAWKGVPVVMKDINDKSLTLGMTEAAKLLNKQLERGKIDGLKLAGVISTIHPTLDYAGFDRVDIVVEAVVENPKVKKAVLAETEQKVRPDTVLASNTSTIPISELANALERPENFCGMHFFNPVHRMPLVEIIRGEKSSDETIAKVVAWASKMGKTPIVVNDCPGFFVNRVLFPYFAGFSQLLRDGADFRKIDKVMEKQFGWPMGPAYLLDVVGIDTAHHAQAVMAAGFPQRMQKDYRDAIDALFDANRFGQKNGLGFWRYKEDSKGKPKKEEDAVVDDLLAEVSQPKRDFSEEEIIARMMIPMVNEVVRCLEEGIIATPAEADMALVYGLGFPPFHGGAFRWLDTLGSAKYLDMAQQYQHLGPLYEVPEGLRNKARHNEPYYPPVEPARPVGDLKTA</sequence>
<protein>
    <recommendedName>
        <fullName evidence="1">Fatty acid oxidation complex subunit alpha</fullName>
    </recommendedName>
    <domain>
        <recommendedName>
            <fullName evidence="1">Enoyl-CoA hydratase/Delta(3)-cis-Delta(2)-trans-enoyl-CoA isomerase/3-hydroxybutyryl-CoA epimerase</fullName>
            <ecNumber evidence="1">4.2.1.17</ecNumber>
            <ecNumber evidence="1">5.1.2.3</ecNumber>
            <ecNumber evidence="1">5.3.3.8</ecNumber>
        </recommendedName>
    </domain>
    <domain>
        <recommendedName>
            <fullName evidence="1">3-hydroxyacyl-CoA dehydrogenase</fullName>
            <ecNumber evidence="1">1.1.1.35</ecNumber>
        </recommendedName>
    </domain>
</protein>